<protein>
    <recommendedName>
        <fullName>Type IV secretion system protein virB8</fullName>
    </recommendedName>
</protein>
<keyword id="KW-0997">Cell inner membrane</keyword>
<keyword id="KW-1003">Cell membrane</keyword>
<keyword id="KW-0472">Membrane</keyword>
<keyword id="KW-1185">Reference proteome</keyword>
<keyword id="KW-0812">Transmembrane</keyword>
<keyword id="KW-1133">Transmembrane helix</keyword>
<keyword id="KW-0843">Virulence</keyword>
<reference key="1">
    <citation type="journal article" date="2000" name="J. Bacteriol.">
        <title>A homologue of an operon required for DNA transfer in Agrobacterium is required in Brucella abortus for virulence and intracellular multiplication.</title>
        <authorList>
            <person name="Sieira R."/>
            <person name="Comerci D.J."/>
            <person name="Sanchez D.O."/>
            <person name="Ugalde R.A."/>
        </authorList>
    </citation>
    <scope>NUCLEOTIDE SEQUENCE [GENOMIC DNA]</scope>
    <scope>TRANSCRIPTION</scope>
    <scope>FUNCTION</scope>
</reference>
<reference key="2">
    <citation type="journal article" date="2005" name="Infect. Immun.">
        <title>Whole-genome analyses of speciation events in pathogenic Brucellae.</title>
        <authorList>
            <person name="Chain P.S."/>
            <person name="Comerci D.J."/>
            <person name="Tolmasky M.E."/>
            <person name="Larimer F.W."/>
            <person name="Malfatti S.A."/>
            <person name="Vergez L.M."/>
            <person name="Aguero F."/>
            <person name="Land M.L."/>
            <person name="Ugalde R.A."/>
            <person name="Garcia E."/>
        </authorList>
    </citation>
    <scope>NUCLEOTIDE SEQUENCE [LARGE SCALE GENOMIC DNA]</scope>
    <source>
        <strain>2308</strain>
    </source>
</reference>
<sequence length="239" mass="26446">MFGRKQSPQKSVKNGQGNAPSVYDEALNWEAAHVRLVEKSERRAWKIAGAFGTITVLLGIGIAGMLPLKQHVPYLVRVNAQTGAPDILTSLDEKSVSYDTVMDKYWLSQYVIARETYDWYTLQKDYETVGMLSSPSEGQSYASQFQGDKALDKQYGSNVRTSVTIVSIVPNGKGIGTVRFAKTTKRTNETGDGETTHWIATIGYQYVNPSLMSESARLTNPLGFNVTSYRVDPEMGVVQ</sequence>
<dbReference type="EMBL" id="AF226278">
    <property type="protein sequence ID" value="AAF73901.1"/>
    <property type="molecule type" value="Genomic_DNA"/>
</dbReference>
<dbReference type="EMBL" id="AM040265">
    <property type="protein sequence ID" value="CAJ12227.1"/>
    <property type="molecule type" value="Genomic_DNA"/>
</dbReference>
<dbReference type="RefSeq" id="WP_002966517.1">
    <property type="nucleotide sequence ID" value="NZ_KN046823.1"/>
</dbReference>
<dbReference type="SMR" id="Q2YJ78"/>
<dbReference type="IntAct" id="Q2YJ78">
    <property type="interactions" value="2"/>
</dbReference>
<dbReference type="STRING" id="359391.BAB2_0061"/>
<dbReference type="KEGG" id="bmf:BAB2_0061"/>
<dbReference type="PATRIC" id="fig|359391.11.peg.2009"/>
<dbReference type="HOGENOM" id="CLU_068461_1_1_5"/>
<dbReference type="PhylomeDB" id="Q2YJ78"/>
<dbReference type="BioCyc" id="MetaCyc:BAB_RS26650-MONOMER"/>
<dbReference type="PRO" id="PR:Q2YJ78"/>
<dbReference type="Proteomes" id="UP000002719">
    <property type="component" value="Chromosome II"/>
</dbReference>
<dbReference type="GO" id="GO:0005886">
    <property type="term" value="C:plasma membrane"/>
    <property type="evidence" value="ECO:0007669"/>
    <property type="project" value="UniProtKB-SubCell"/>
</dbReference>
<dbReference type="GO" id="GO:0030255">
    <property type="term" value="P:protein secretion by the type IV secretion system"/>
    <property type="evidence" value="ECO:0007669"/>
    <property type="project" value="InterPro"/>
</dbReference>
<dbReference type="CDD" id="cd16424">
    <property type="entry name" value="VirB8"/>
    <property type="match status" value="1"/>
</dbReference>
<dbReference type="Gene3D" id="3.10.450.230">
    <property type="entry name" value="VirB8 protein"/>
    <property type="match status" value="1"/>
</dbReference>
<dbReference type="InterPro" id="IPR032710">
    <property type="entry name" value="NTF2-like_dom_sf"/>
</dbReference>
<dbReference type="InterPro" id="IPR007430">
    <property type="entry name" value="VirB8"/>
</dbReference>
<dbReference type="InterPro" id="IPR026264">
    <property type="entry name" value="VirB8/PtlE"/>
</dbReference>
<dbReference type="Pfam" id="PF04335">
    <property type="entry name" value="VirB8"/>
    <property type="match status" value="1"/>
</dbReference>
<dbReference type="PIRSF" id="PIRSF003299">
    <property type="entry name" value="VirB8_PtlE"/>
    <property type="match status" value="1"/>
</dbReference>
<dbReference type="SUPFAM" id="SSF54427">
    <property type="entry name" value="NTF2-like"/>
    <property type="match status" value="1"/>
</dbReference>
<comment type="function">
    <text evidence="2">The virB operon is essential for intracellular survival and is not involved in the invasion process. Constitutes a major determinant of virulence in mice.</text>
</comment>
<comment type="subcellular location">
    <subcellularLocation>
        <location evidence="3">Cell inner membrane</location>
        <topology evidence="3">Single-pass membrane protein</topology>
    </subcellularLocation>
</comment>
<comment type="miscellaneous">
    <text>Transcription is turned on at the beginning of the stationary phase of vegetative growth.</text>
</comment>
<comment type="similarity">
    <text evidence="3">Belongs to the virB8 family.</text>
</comment>
<feature type="chain" id="PRO_0000291389" description="Type IV secretion system protein virB8">
    <location>
        <begin position="1"/>
        <end position="239"/>
    </location>
</feature>
<feature type="transmembrane region" description="Helical" evidence="1">
    <location>
        <begin position="47"/>
        <end position="67"/>
    </location>
</feature>
<proteinExistence type="inferred from homology"/>
<name>VIRB8_BRUA2</name>
<evidence type="ECO:0000255" key="1"/>
<evidence type="ECO:0000269" key="2">
    <source>
    </source>
</evidence>
<evidence type="ECO:0000305" key="3"/>
<organism>
    <name type="scientific">Brucella abortus (strain 2308)</name>
    <dbReference type="NCBI Taxonomy" id="359391"/>
    <lineage>
        <taxon>Bacteria</taxon>
        <taxon>Pseudomonadati</taxon>
        <taxon>Pseudomonadota</taxon>
        <taxon>Alphaproteobacteria</taxon>
        <taxon>Hyphomicrobiales</taxon>
        <taxon>Brucellaceae</taxon>
        <taxon>Brucella/Ochrobactrum group</taxon>
        <taxon>Brucella</taxon>
    </lineage>
</organism>
<gene>
    <name type="primary">virB8</name>
    <name type="ordered locus">BAB2_0061</name>
</gene>
<accession>Q2YJ78</accession>
<accession>Q57A21</accession>
<accession>Q7BMZ6</accession>